<name>NADE_RHILO</name>
<protein>
    <recommendedName>
        <fullName evidence="1">NH(3)-dependent NAD(+) synthetase</fullName>
        <ecNumber evidence="1">6.3.1.5</ecNumber>
    </recommendedName>
</protein>
<proteinExistence type="inferred from homology"/>
<feature type="chain" id="PRO_0000152188" description="NH(3)-dependent NAD(+) synthetase">
    <location>
        <begin position="1"/>
        <end position="319"/>
    </location>
</feature>
<feature type="binding site" evidence="1">
    <location>
        <begin position="33"/>
        <end position="40"/>
    </location>
    <ligand>
        <name>ATP</name>
        <dbReference type="ChEBI" id="CHEBI:30616"/>
    </ligand>
</feature>
<feature type="binding site" evidence="1">
    <location>
        <position position="39"/>
    </location>
    <ligand>
        <name>Mg(2+)</name>
        <dbReference type="ChEBI" id="CHEBI:18420"/>
    </ligand>
</feature>
<feature type="binding site" evidence="1">
    <location>
        <position position="169"/>
    </location>
    <ligand>
        <name>deamido-NAD(+)</name>
        <dbReference type="ChEBI" id="CHEBI:58437"/>
    </ligand>
</feature>
<feature type="binding site" evidence="1">
    <location>
        <position position="189"/>
    </location>
    <ligand>
        <name>ATP</name>
        <dbReference type="ChEBI" id="CHEBI:30616"/>
    </ligand>
</feature>
<feature type="binding site" evidence="1">
    <location>
        <position position="194"/>
    </location>
    <ligand>
        <name>Mg(2+)</name>
        <dbReference type="ChEBI" id="CHEBI:18420"/>
    </ligand>
</feature>
<feature type="binding site" evidence="1">
    <location>
        <position position="202"/>
    </location>
    <ligand>
        <name>deamido-NAD(+)</name>
        <dbReference type="ChEBI" id="CHEBI:58437"/>
    </ligand>
</feature>
<feature type="binding site" evidence="1">
    <location>
        <position position="209"/>
    </location>
    <ligand>
        <name>deamido-NAD(+)</name>
        <dbReference type="ChEBI" id="CHEBI:58437"/>
    </ligand>
</feature>
<feature type="binding site" evidence="1">
    <location>
        <position position="218"/>
    </location>
    <ligand>
        <name>ATP</name>
        <dbReference type="ChEBI" id="CHEBI:30616"/>
    </ligand>
</feature>
<feature type="binding site" evidence="1">
    <location>
        <position position="240"/>
    </location>
    <ligand>
        <name>ATP</name>
        <dbReference type="ChEBI" id="CHEBI:30616"/>
    </ligand>
</feature>
<evidence type="ECO:0000255" key="1">
    <source>
        <dbReference type="HAMAP-Rule" id="MF_00193"/>
    </source>
</evidence>
<sequence length="319" mass="35517">MLALDARAEVDRIVDTLRKQVLGTLRRRGVVVGLSGGIDSSVVATLCTRAFGKDKVLGLFMPERDSSGDSLRLGRRVAAQLGIENILEDIGPAVEAVGAYRRQLEAIRTVVPDYGDGWKCKLVIEPVLESNGLNITRLTVQDPEGKVDTVRLSPAAYLQIVAATNYKQRLRKMTEYYHADRLKYAVAGTPNRLEYDQGFFVKQGDGTADVMPIVHLYKTQVYQLAEYLGVDEEIRQRPPTTDTFSMAQSQEEFYFALPYHLMDLCLYGLNHGIASDEVAAVAGLTEPQLQKVYKDIDAKRRAAHYLHARPLLSVEIGED</sequence>
<dbReference type="EC" id="6.3.1.5" evidence="1"/>
<dbReference type="EMBL" id="BA000012">
    <property type="protein sequence ID" value="BAB52980.1"/>
    <property type="molecule type" value="Genomic_DNA"/>
</dbReference>
<dbReference type="SMR" id="Q988H0"/>
<dbReference type="KEGG" id="mlo:mll6744"/>
<dbReference type="eggNOG" id="COG0171">
    <property type="taxonomic scope" value="Bacteria"/>
</dbReference>
<dbReference type="HOGENOM" id="CLU_059327_0_0_5"/>
<dbReference type="UniPathway" id="UPA00253">
    <property type="reaction ID" value="UER00333"/>
</dbReference>
<dbReference type="Proteomes" id="UP000000552">
    <property type="component" value="Chromosome"/>
</dbReference>
<dbReference type="GO" id="GO:0005737">
    <property type="term" value="C:cytoplasm"/>
    <property type="evidence" value="ECO:0007669"/>
    <property type="project" value="InterPro"/>
</dbReference>
<dbReference type="GO" id="GO:0005524">
    <property type="term" value="F:ATP binding"/>
    <property type="evidence" value="ECO:0007669"/>
    <property type="project" value="UniProtKB-UniRule"/>
</dbReference>
<dbReference type="GO" id="GO:0004359">
    <property type="term" value="F:glutaminase activity"/>
    <property type="evidence" value="ECO:0007669"/>
    <property type="project" value="InterPro"/>
</dbReference>
<dbReference type="GO" id="GO:0046872">
    <property type="term" value="F:metal ion binding"/>
    <property type="evidence" value="ECO:0007669"/>
    <property type="project" value="UniProtKB-KW"/>
</dbReference>
<dbReference type="GO" id="GO:0003952">
    <property type="term" value="F:NAD+ synthase (glutamine-hydrolyzing) activity"/>
    <property type="evidence" value="ECO:0007669"/>
    <property type="project" value="InterPro"/>
</dbReference>
<dbReference type="GO" id="GO:0008795">
    <property type="term" value="F:NAD+ synthase activity"/>
    <property type="evidence" value="ECO:0007669"/>
    <property type="project" value="UniProtKB-UniRule"/>
</dbReference>
<dbReference type="GO" id="GO:0009435">
    <property type="term" value="P:NAD biosynthetic process"/>
    <property type="evidence" value="ECO:0007669"/>
    <property type="project" value="UniProtKB-UniRule"/>
</dbReference>
<dbReference type="CDD" id="cd00553">
    <property type="entry name" value="NAD_synthase"/>
    <property type="match status" value="1"/>
</dbReference>
<dbReference type="Gene3D" id="3.40.50.620">
    <property type="entry name" value="HUPs"/>
    <property type="match status" value="1"/>
</dbReference>
<dbReference type="HAMAP" id="MF_00193">
    <property type="entry name" value="NadE_ammonia_dep"/>
    <property type="match status" value="1"/>
</dbReference>
<dbReference type="InterPro" id="IPR022310">
    <property type="entry name" value="NAD/GMP_synthase"/>
</dbReference>
<dbReference type="InterPro" id="IPR003694">
    <property type="entry name" value="NAD_synthase"/>
</dbReference>
<dbReference type="InterPro" id="IPR022926">
    <property type="entry name" value="NH(3)-dep_NAD(+)_synth"/>
</dbReference>
<dbReference type="InterPro" id="IPR014729">
    <property type="entry name" value="Rossmann-like_a/b/a_fold"/>
</dbReference>
<dbReference type="NCBIfam" id="TIGR00552">
    <property type="entry name" value="nadE"/>
    <property type="match status" value="1"/>
</dbReference>
<dbReference type="NCBIfam" id="NF002048">
    <property type="entry name" value="PRK00876.1"/>
    <property type="match status" value="1"/>
</dbReference>
<dbReference type="PANTHER" id="PTHR23090:SF9">
    <property type="entry name" value="GLUTAMINE-DEPENDENT NAD(+) SYNTHETASE"/>
    <property type="match status" value="1"/>
</dbReference>
<dbReference type="PANTHER" id="PTHR23090">
    <property type="entry name" value="NH 3 /GLUTAMINE-DEPENDENT NAD + SYNTHETASE"/>
    <property type="match status" value="1"/>
</dbReference>
<dbReference type="Pfam" id="PF02540">
    <property type="entry name" value="NAD_synthase"/>
    <property type="match status" value="2"/>
</dbReference>
<dbReference type="SUPFAM" id="SSF52402">
    <property type="entry name" value="Adenine nucleotide alpha hydrolases-like"/>
    <property type="match status" value="1"/>
</dbReference>
<accession>Q988H0</accession>
<reference key="1">
    <citation type="journal article" date="2000" name="DNA Res.">
        <title>Complete genome structure of the nitrogen-fixing symbiotic bacterium Mesorhizobium loti.</title>
        <authorList>
            <person name="Kaneko T."/>
            <person name="Nakamura Y."/>
            <person name="Sato S."/>
            <person name="Asamizu E."/>
            <person name="Kato T."/>
            <person name="Sasamoto S."/>
            <person name="Watanabe A."/>
            <person name="Idesawa K."/>
            <person name="Ishikawa A."/>
            <person name="Kawashima K."/>
            <person name="Kimura T."/>
            <person name="Kishida Y."/>
            <person name="Kiyokawa C."/>
            <person name="Kohara M."/>
            <person name="Matsumoto M."/>
            <person name="Matsuno A."/>
            <person name="Mochizuki Y."/>
            <person name="Nakayama S."/>
            <person name="Nakazaki N."/>
            <person name="Shimpo S."/>
            <person name="Sugimoto M."/>
            <person name="Takeuchi C."/>
            <person name="Yamada M."/>
            <person name="Tabata S."/>
        </authorList>
    </citation>
    <scope>NUCLEOTIDE SEQUENCE [LARGE SCALE GENOMIC DNA]</scope>
    <source>
        <strain>LMG 29417 / CECT 9101 / MAFF 303099</strain>
    </source>
</reference>
<gene>
    <name evidence="1" type="primary">nadE</name>
    <name type="ordered locus">mll6744</name>
</gene>
<comment type="function">
    <text evidence="1">Catalyzes the ATP-dependent amidation of deamido-NAD to form NAD. Uses ammonia as a nitrogen source.</text>
</comment>
<comment type="catalytic activity">
    <reaction evidence="1">
        <text>deamido-NAD(+) + NH4(+) + ATP = AMP + diphosphate + NAD(+) + H(+)</text>
        <dbReference type="Rhea" id="RHEA:21188"/>
        <dbReference type="ChEBI" id="CHEBI:15378"/>
        <dbReference type="ChEBI" id="CHEBI:28938"/>
        <dbReference type="ChEBI" id="CHEBI:30616"/>
        <dbReference type="ChEBI" id="CHEBI:33019"/>
        <dbReference type="ChEBI" id="CHEBI:57540"/>
        <dbReference type="ChEBI" id="CHEBI:58437"/>
        <dbReference type="ChEBI" id="CHEBI:456215"/>
        <dbReference type="EC" id="6.3.1.5"/>
    </reaction>
</comment>
<comment type="pathway">
    <text evidence="1">Cofactor biosynthesis; NAD(+) biosynthesis; NAD(+) from deamido-NAD(+) (ammonia route): step 1/1.</text>
</comment>
<comment type="subunit">
    <text evidence="1">Homodimer.</text>
</comment>
<comment type="similarity">
    <text evidence="1">Belongs to the NAD synthetase family.</text>
</comment>
<organism>
    <name type="scientific">Mesorhizobium japonicum (strain LMG 29417 / CECT 9101 / MAFF 303099)</name>
    <name type="common">Mesorhizobium loti (strain MAFF 303099)</name>
    <dbReference type="NCBI Taxonomy" id="266835"/>
    <lineage>
        <taxon>Bacteria</taxon>
        <taxon>Pseudomonadati</taxon>
        <taxon>Pseudomonadota</taxon>
        <taxon>Alphaproteobacteria</taxon>
        <taxon>Hyphomicrobiales</taxon>
        <taxon>Phyllobacteriaceae</taxon>
        <taxon>Mesorhizobium</taxon>
    </lineage>
</organism>
<keyword id="KW-0067">ATP-binding</keyword>
<keyword id="KW-0436">Ligase</keyword>
<keyword id="KW-0460">Magnesium</keyword>
<keyword id="KW-0479">Metal-binding</keyword>
<keyword id="KW-0520">NAD</keyword>
<keyword id="KW-0547">Nucleotide-binding</keyword>